<comment type="function">
    <text evidence="1">One of the primary rRNA binding proteins. Required for association of the 30S and 50S subunits to form the 70S ribosome, for tRNA binding and peptide bond formation. It has been suggested to have peptidyltransferase activity; this is somewhat controversial. Makes several contacts with the 16S rRNA in the 70S ribosome.</text>
</comment>
<comment type="subunit">
    <text evidence="1">Part of the 50S ribosomal subunit. Forms a bridge to the 30S subunit in the 70S ribosome.</text>
</comment>
<comment type="similarity">
    <text evidence="1">Belongs to the universal ribosomal protein uL2 family.</text>
</comment>
<gene>
    <name evidence="1" type="primary">rplB</name>
    <name type="ordered locus">MT0731</name>
</gene>
<protein>
    <recommendedName>
        <fullName evidence="1">Large ribosomal subunit protein uL2</fullName>
    </recommendedName>
    <alternativeName>
        <fullName evidence="3">50S ribosomal protein L2</fullName>
    </alternativeName>
</protein>
<reference key="1">
    <citation type="journal article" date="2002" name="J. Bacteriol.">
        <title>Whole-genome comparison of Mycobacterium tuberculosis clinical and laboratory strains.</title>
        <authorList>
            <person name="Fleischmann R.D."/>
            <person name="Alland D."/>
            <person name="Eisen J.A."/>
            <person name="Carpenter L."/>
            <person name="White O."/>
            <person name="Peterson J.D."/>
            <person name="DeBoy R.T."/>
            <person name="Dodson R.J."/>
            <person name="Gwinn M.L."/>
            <person name="Haft D.H."/>
            <person name="Hickey E.K."/>
            <person name="Kolonay J.F."/>
            <person name="Nelson W.C."/>
            <person name="Umayam L.A."/>
            <person name="Ermolaeva M.D."/>
            <person name="Salzberg S.L."/>
            <person name="Delcher A."/>
            <person name="Utterback T.R."/>
            <person name="Weidman J.F."/>
            <person name="Khouri H.M."/>
            <person name="Gill J."/>
            <person name="Mikula A."/>
            <person name="Bishai W."/>
            <person name="Jacobs W.R. Jr."/>
            <person name="Venter J.C."/>
            <person name="Fraser C.M."/>
        </authorList>
    </citation>
    <scope>NUCLEOTIDE SEQUENCE [LARGE SCALE GENOMIC DNA]</scope>
    <source>
        <strain>CDC 1551 / Oshkosh</strain>
    </source>
</reference>
<organism>
    <name type="scientific">Mycobacterium tuberculosis (strain CDC 1551 / Oshkosh)</name>
    <dbReference type="NCBI Taxonomy" id="83331"/>
    <lineage>
        <taxon>Bacteria</taxon>
        <taxon>Bacillati</taxon>
        <taxon>Actinomycetota</taxon>
        <taxon>Actinomycetes</taxon>
        <taxon>Mycobacteriales</taxon>
        <taxon>Mycobacteriaceae</taxon>
        <taxon>Mycobacterium</taxon>
        <taxon>Mycobacterium tuberculosis complex</taxon>
    </lineage>
</organism>
<evidence type="ECO:0000255" key="1">
    <source>
        <dbReference type="HAMAP-Rule" id="MF_01320"/>
    </source>
</evidence>
<evidence type="ECO:0000256" key="2">
    <source>
        <dbReference type="SAM" id="MobiDB-lite"/>
    </source>
</evidence>
<evidence type="ECO:0000305" key="3"/>
<sequence>MAIRKYKPTTPGRRGASVSDFAEITRSTPEKSLVRPLHGRGGRNAHGRITTRHKGGGHKRAYRMIDFRRNDKDGVNAKVAHIEYDPNRTARIALLHYLDGEKRYIIAPNGLSQGDVVESGANADIKPGNNLPLRNIPAGTLIHAVELRPGGGAKLARSAGSSIQLLGKEASYASLRMPSGEIRRVDVRCRATVGEVGNAEQANINWGKAGRMRWKGKRPSVRGVVMNPVDHPHGGGEGKTSGGRHPVSPWGKPEGRTRNANKSSNKFIVRRRRTGKKHSR</sequence>
<dbReference type="EMBL" id="AE000516">
    <property type="protein sequence ID" value="AAK44962.1"/>
    <property type="molecule type" value="Genomic_DNA"/>
</dbReference>
<dbReference type="PIR" id="C70642">
    <property type="entry name" value="C70642"/>
</dbReference>
<dbReference type="RefSeq" id="WP_003403582.1">
    <property type="nucleotide sequence ID" value="NZ_KK341227.1"/>
</dbReference>
<dbReference type="SMR" id="P9WHA4"/>
<dbReference type="GeneID" id="45424669"/>
<dbReference type="KEGG" id="mtc:MT0731"/>
<dbReference type="PATRIC" id="fig|83331.31.peg.781"/>
<dbReference type="HOGENOM" id="CLU_036235_2_1_11"/>
<dbReference type="Proteomes" id="UP000001020">
    <property type="component" value="Chromosome"/>
</dbReference>
<dbReference type="GO" id="GO:0015934">
    <property type="term" value="C:large ribosomal subunit"/>
    <property type="evidence" value="ECO:0007669"/>
    <property type="project" value="InterPro"/>
</dbReference>
<dbReference type="GO" id="GO:0019843">
    <property type="term" value="F:rRNA binding"/>
    <property type="evidence" value="ECO:0007669"/>
    <property type="project" value="UniProtKB-UniRule"/>
</dbReference>
<dbReference type="GO" id="GO:0003735">
    <property type="term" value="F:structural constituent of ribosome"/>
    <property type="evidence" value="ECO:0007669"/>
    <property type="project" value="InterPro"/>
</dbReference>
<dbReference type="GO" id="GO:0016740">
    <property type="term" value="F:transferase activity"/>
    <property type="evidence" value="ECO:0007669"/>
    <property type="project" value="InterPro"/>
</dbReference>
<dbReference type="GO" id="GO:0002181">
    <property type="term" value="P:cytoplasmic translation"/>
    <property type="evidence" value="ECO:0007669"/>
    <property type="project" value="TreeGrafter"/>
</dbReference>
<dbReference type="FunFam" id="2.30.30.30:FF:000001">
    <property type="entry name" value="50S ribosomal protein L2"/>
    <property type="match status" value="1"/>
</dbReference>
<dbReference type="FunFam" id="2.40.50.140:FF:000003">
    <property type="entry name" value="50S ribosomal protein L2"/>
    <property type="match status" value="1"/>
</dbReference>
<dbReference type="FunFam" id="4.10.950.10:FF:000001">
    <property type="entry name" value="50S ribosomal protein L2"/>
    <property type="match status" value="1"/>
</dbReference>
<dbReference type="Gene3D" id="2.30.30.30">
    <property type="match status" value="1"/>
</dbReference>
<dbReference type="Gene3D" id="2.40.50.140">
    <property type="entry name" value="Nucleic acid-binding proteins"/>
    <property type="match status" value="1"/>
</dbReference>
<dbReference type="Gene3D" id="4.10.950.10">
    <property type="entry name" value="Ribosomal protein L2, domain 3"/>
    <property type="match status" value="1"/>
</dbReference>
<dbReference type="HAMAP" id="MF_01320_B">
    <property type="entry name" value="Ribosomal_uL2_B"/>
    <property type="match status" value="1"/>
</dbReference>
<dbReference type="InterPro" id="IPR012340">
    <property type="entry name" value="NA-bd_OB-fold"/>
</dbReference>
<dbReference type="InterPro" id="IPR014722">
    <property type="entry name" value="Rib_uL2_dom2"/>
</dbReference>
<dbReference type="InterPro" id="IPR002171">
    <property type="entry name" value="Ribosomal_uL2"/>
</dbReference>
<dbReference type="InterPro" id="IPR005880">
    <property type="entry name" value="Ribosomal_uL2_bac/org-type"/>
</dbReference>
<dbReference type="InterPro" id="IPR022669">
    <property type="entry name" value="Ribosomal_uL2_C"/>
</dbReference>
<dbReference type="InterPro" id="IPR022671">
    <property type="entry name" value="Ribosomal_uL2_CS"/>
</dbReference>
<dbReference type="InterPro" id="IPR014726">
    <property type="entry name" value="Ribosomal_uL2_dom3"/>
</dbReference>
<dbReference type="InterPro" id="IPR022666">
    <property type="entry name" value="Ribosomal_uL2_RNA-bd_dom"/>
</dbReference>
<dbReference type="InterPro" id="IPR008991">
    <property type="entry name" value="Translation_prot_SH3-like_sf"/>
</dbReference>
<dbReference type="NCBIfam" id="TIGR01171">
    <property type="entry name" value="rplB_bact"/>
    <property type="match status" value="1"/>
</dbReference>
<dbReference type="PANTHER" id="PTHR13691:SF5">
    <property type="entry name" value="LARGE RIBOSOMAL SUBUNIT PROTEIN UL2M"/>
    <property type="match status" value="1"/>
</dbReference>
<dbReference type="PANTHER" id="PTHR13691">
    <property type="entry name" value="RIBOSOMAL PROTEIN L2"/>
    <property type="match status" value="1"/>
</dbReference>
<dbReference type="Pfam" id="PF00181">
    <property type="entry name" value="Ribosomal_L2"/>
    <property type="match status" value="1"/>
</dbReference>
<dbReference type="Pfam" id="PF03947">
    <property type="entry name" value="Ribosomal_L2_C"/>
    <property type="match status" value="1"/>
</dbReference>
<dbReference type="PIRSF" id="PIRSF002158">
    <property type="entry name" value="Ribosomal_L2"/>
    <property type="match status" value="1"/>
</dbReference>
<dbReference type="SMART" id="SM01383">
    <property type="entry name" value="Ribosomal_L2"/>
    <property type="match status" value="1"/>
</dbReference>
<dbReference type="SMART" id="SM01382">
    <property type="entry name" value="Ribosomal_L2_C"/>
    <property type="match status" value="1"/>
</dbReference>
<dbReference type="SUPFAM" id="SSF50249">
    <property type="entry name" value="Nucleic acid-binding proteins"/>
    <property type="match status" value="1"/>
</dbReference>
<dbReference type="SUPFAM" id="SSF50104">
    <property type="entry name" value="Translation proteins SH3-like domain"/>
    <property type="match status" value="1"/>
</dbReference>
<dbReference type="PROSITE" id="PS00467">
    <property type="entry name" value="RIBOSOMAL_L2"/>
    <property type="match status" value="1"/>
</dbReference>
<name>RL2_MYCTO</name>
<proteinExistence type="inferred from homology"/>
<keyword id="KW-1185">Reference proteome</keyword>
<keyword id="KW-0687">Ribonucleoprotein</keyword>
<keyword id="KW-0689">Ribosomal protein</keyword>
<keyword id="KW-0694">RNA-binding</keyword>
<keyword id="KW-0699">rRNA-binding</keyword>
<accession>P9WHA4</accession>
<accession>L0T796</accession>
<accession>P95052</accession>
<feature type="chain" id="PRO_0000428221" description="Large ribosomal subunit protein uL2">
    <location>
        <begin position="1"/>
        <end position="280"/>
    </location>
</feature>
<feature type="region of interest" description="Disordered" evidence="2">
    <location>
        <begin position="27"/>
        <end position="59"/>
    </location>
</feature>
<feature type="region of interest" description="Disordered" evidence="2">
    <location>
        <begin position="225"/>
        <end position="280"/>
    </location>
</feature>
<feature type="compositionally biased region" description="Basic residues" evidence="2">
    <location>
        <begin position="37"/>
        <end position="59"/>
    </location>
</feature>
<feature type="compositionally biased region" description="Basic residues" evidence="2">
    <location>
        <begin position="268"/>
        <end position="280"/>
    </location>
</feature>